<organism>
    <name type="scientific">Mesostigma viride</name>
    <name type="common">Green alga</name>
    <dbReference type="NCBI Taxonomy" id="41882"/>
    <lineage>
        <taxon>Eukaryota</taxon>
        <taxon>Viridiplantae</taxon>
        <taxon>Streptophyta</taxon>
        <taxon>Mesostigmatophyceae</taxon>
        <taxon>Mesostigmatales</taxon>
        <taxon>Mesostigmataceae</taxon>
        <taxon>Mesostigma</taxon>
    </lineage>
</organism>
<gene>
    <name evidence="1" type="primary">rpoC1</name>
</gene>
<evidence type="ECO:0000255" key="1">
    <source>
        <dbReference type="HAMAP-Rule" id="MF_01323"/>
    </source>
</evidence>
<geneLocation type="chloroplast"/>
<accession>Q9MUS6</accession>
<sequence length="668" mass="76778">MIPKKLVHFEYIQINLASPERILQWGQRTLSNGEIVGEVTRSETINYRTLKPEMDGLFCERIFGPVKDWECHCGRYKRVRYNKNSEISIVCERCGVEVIESGVRRHRMGHIKLASPVTHVWYLKGIPSYISVILGMPRKDVENIVYYNNNDSISFKNISQFLTENRFFSNSTDILDDLLNIKEKEEEISGGEAIYKMLKNFDLKATAQKIREDLAENEAAWTQSSFFNGEDSDWVLDENQWNKKNQDWQIEEERRNKKRNKLIKRLRIINHFIATGAKPEWMVLSILPVLPPELRPMVQLDGGRFATSDLNDLYRRVINRNNRLAKLNNMLAPEIVVRSEKRMLQESVDALIDNGKRGKALVGNNKIPLKSLSDIIKGKQGRFRQNLLGKRVDYSGRSVIVVGPNLKLHQCGLPKEMAIELFQPFVIHTLINEGLANNIKGAKKIIQNSDPILWEILNQVIQGHPVLLNRAPTLHRLGIQAFEPILVEGRAIQLHPLVCPAFNADFDGDQMAVHIPLSLEAQTEARLLMLASSNLLSPATGLPIISPSQDMVLGCYYLTTEDIRLRGTKSHYFSSLEQVIMAYDQKKINLHTIVWVRFSGIIDSKYIKQNPIEIRVDSLGFVSYIYKNYQMRKDFKNNLISQYIRTTPGRILFNQVIQNSLDYSPSEY</sequence>
<reference key="1">
    <citation type="journal article" date="2000" name="Nature">
        <title>Ancestral chloroplast genome in Mesostigma viride reveals an early branch of green plant evolution.</title>
        <authorList>
            <person name="Lemieux C."/>
            <person name="Otis C."/>
            <person name="Turmel M."/>
        </authorList>
    </citation>
    <scope>NUCLEOTIDE SEQUENCE [LARGE SCALE GENOMIC DNA]</scope>
    <source>
        <strain>NIES-296 / KY-14 / CCMP 2046</strain>
    </source>
</reference>
<name>RPOC1_MESVI</name>
<proteinExistence type="inferred from homology"/>
<dbReference type="EC" id="2.7.7.6" evidence="1"/>
<dbReference type="EMBL" id="AF166114">
    <property type="protein sequence ID" value="AAF43825.1"/>
    <property type="molecule type" value="Genomic_DNA"/>
</dbReference>
<dbReference type="RefSeq" id="NP_038384.1">
    <property type="nucleotide sequence ID" value="NC_002186.1"/>
</dbReference>
<dbReference type="SMR" id="Q9MUS6"/>
<dbReference type="GeneID" id="800935"/>
<dbReference type="GO" id="GO:0009507">
    <property type="term" value="C:chloroplast"/>
    <property type="evidence" value="ECO:0007669"/>
    <property type="project" value="UniProtKB-SubCell"/>
</dbReference>
<dbReference type="GO" id="GO:0000428">
    <property type="term" value="C:DNA-directed RNA polymerase complex"/>
    <property type="evidence" value="ECO:0007669"/>
    <property type="project" value="UniProtKB-KW"/>
</dbReference>
<dbReference type="GO" id="GO:0005739">
    <property type="term" value="C:mitochondrion"/>
    <property type="evidence" value="ECO:0007669"/>
    <property type="project" value="GOC"/>
</dbReference>
<dbReference type="GO" id="GO:0003677">
    <property type="term" value="F:DNA binding"/>
    <property type="evidence" value="ECO:0007669"/>
    <property type="project" value="UniProtKB-UniRule"/>
</dbReference>
<dbReference type="GO" id="GO:0003899">
    <property type="term" value="F:DNA-directed RNA polymerase activity"/>
    <property type="evidence" value="ECO:0007669"/>
    <property type="project" value="UniProtKB-UniRule"/>
</dbReference>
<dbReference type="GO" id="GO:0000287">
    <property type="term" value="F:magnesium ion binding"/>
    <property type="evidence" value="ECO:0007669"/>
    <property type="project" value="UniProtKB-UniRule"/>
</dbReference>
<dbReference type="GO" id="GO:0008270">
    <property type="term" value="F:zinc ion binding"/>
    <property type="evidence" value="ECO:0007669"/>
    <property type="project" value="UniProtKB-UniRule"/>
</dbReference>
<dbReference type="GO" id="GO:0006351">
    <property type="term" value="P:DNA-templated transcription"/>
    <property type="evidence" value="ECO:0007669"/>
    <property type="project" value="UniProtKB-UniRule"/>
</dbReference>
<dbReference type="Gene3D" id="1.10.40.90">
    <property type="match status" value="1"/>
</dbReference>
<dbReference type="Gene3D" id="2.40.40.20">
    <property type="match status" value="1"/>
</dbReference>
<dbReference type="Gene3D" id="4.10.860.120">
    <property type="entry name" value="RNA polymerase II, clamp domain"/>
    <property type="match status" value="1"/>
</dbReference>
<dbReference type="Gene3D" id="1.10.274.100">
    <property type="entry name" value="RNA polymerase Rpb1, domain 3"/>
    <property type="match status" value="1"/>
</dbReference>
<dbReference type="HAMAP" id="MF_01323">
    <property type="entry name" value="RNApol_bact_RpoC1"/>
    <property type="match status" value="1"/>
</dbReference>
<dbReference type="InterPro" id="IPR045867">
    <property type="entry name" value="DNA-dir_RpoC_beta_prime"/>
</dbReference>
<dbReference type="InterPro" id="IPR000722">
    <property type="entry name" value="RNA_pol_asu"/>
</dbReference>
<dbReference type="InterPro" id="IPR006592">
    <property type="entry name" value="RNA_pol_N"/>
</dbReference>
<dbReference type="InterPro" id="IPR007080">
    <property type="entry name" value="RNA_pol_Rpb1_1"/>
</dbReference>
<dbReference type="InterPro" id="IPR007066">
    <property type="entry name" value="RNA_pol_Rpb1_3"/>
</dbReference>
<dbReference type="InterPro" id="IPR042102">
    <property type="entry name" value="RNA_pol_Rpb1_3_sf"/>
</dbReference>
<dbReference type="InterPro" id="IPR044893">
    <property type="entry name" value="RNA_pol_Rpb1_clamp_domain"/>
</dbReference>
<dbReference type="InterPro" id="IPR034678">
    <property type="entry name" value="RNApol_RpoC1"/>
</dbReference>
<dbReference type="PANTHER" id="PTHR19376">
    <property type="entry name" value="DNA-DIRECTED RNA POLYMERASE"/>
    <property type="match status" value="1"/>
</dbReference>
<dbReference type="PANTHER" id="PTHR19376:SF54">
    <property type="entry name" value="DNA-DIRECTED RNA POLYMERASE SUBUNIT BETA"/>
    <property type="match status" value="1"/>
</dbReference>
<dbReference type="Pfam" id="PF04997">
    <property type="entry name" value="RNA_pol_Rpb1_1"/>
    <property type="match status" value="1"/>
</dbReference>
<dbReference type="Pfam" id="PF00623">
    <property type="entry name" value="RNA_pol_Rpb1_2"/>
    <property type="match status" value="1"/>
</dbReference>
<dbReference type="Pfam" id="PF04983">
    <property type="entry name" value="RNA_pol_Rpb1_3"/>
    <property type="match status" value="1"/>
</dbReference>
<dbReference type="SMART" id="SM00663">
    <property type="entry name" value="RPOLA_N"/>
    <property type="match status" value="1"/>
</dbReference>
<dbReference type="SUPFAM" id="SSF64484">
    <property type="entry name" value="beta and beta-prime subunits of DNA dependent RNA-polymerase"/>
    <property type="match status" value="1"/>
</dbReference>
<keyword id="KW-0150">Chloroplast</keyword>
<keyword id="KW-0240">DNA-directed RNA polymerase</keyword>
<keyword id="KW-0460">Magnesium</keyword>
<keyword id="KW-0479">Metal-binding</keyword>
<keyword id="KW-0548">Nucleotidyltransferase</keyword>
<keyword id="KW-0934">Plastid</keyword>
<keyword id="KW-0804">Transcription</keyword>
<keyword id="KW-0808">Transferase</keyword>
<keyword id="KW-0862">Zinc</keyword>
<feature type="chain" id="PRO_0000067881" description="DNA-directed RNA polymerase subunit beta'">
    <location>
        <begin position="1"/>
        <end position="668"/>
    </location>
</feature>
<feature type="binding site" evidence="1">
    <location>
        <position position="71"/>
    </location>
    <ligand>
        <name>Zn(2+)</name>
        <dbReference type="ChEBI" id="CHEBI:29105"/>
    </ligand>
</feature>
<feature type="binding site" evidence="1">
    <location>
        <position position="73"/>
    </location>
    <ligand>
        <name>Zn(2+)</name>
        <dbReference type="ChEBI" id="CHEBI:29105"/>
    </ligand>
</feature>
<feature type="binding site" evidence="1">
    <location>
        <position position="91"/>
    </location>
    <ligand>
        <name>Zn(2+)</name>
        <dbReference type="ChEBI" id="CHEBI:29105"/>
    </ligand>
</feature>
<feature type="binding site" evidence="1">
    <location>
        <position position="94"/>
    </location>
    <ligand>
        <name>Zn(2+)</name>
        <dbReference type="ChEBI" id="CHEBI:29105"/>
    </ligand>
</feature>
<feature type="binding site" evidence="1">
    <location>
        <position position="505"/>
    </location>
    <ligand>
        <name>Mg(2+)</name>
        <dbReference type="ChEBI" id="CHEBI:18420"/>
    </ligand>
</feature>
<feature type="binding site" evidence="1">
    <location>
        <position position="507"/>
    </location>
    <ligand>
        <name>Mg(2+)</name>
        <dbReference type="ChEBI" id="CHEBI:18420"/>
    </ligand>
</feature>
<feature type="binding site" evidence="1">
    <location>
        <position position="509"/>
    </location>
    <ligand>
        <name>Mg(2+)</name>
        <dbReference type="ChEBI" id="CHEBI:18420"/>
    </ligand>
</feature>
<protein>
    <recommendedName>
        <fullName evidence="1">DNA-directed RNA polymerase subunit beta'</fullName>
        <ecNumber evidence="1">2.7.7.6</ecNumber>
    </recommendedName>
    <alternativeName>
        <fullName evidence="1">PEP</fullName>
    </alternativeName>
    <alternativeName>
        <fullName evidence="1">Plastid-encoded RNA polymerase subunit beta'</fullName>
        <shortName evidence="1">RNA polymerase subunit beta'</shortName>
    </alternativeName>
</protein>
<comment type="function">
    <text evidence="1">DNA-dependent RNA polymerase catalyzes the transcription of DNA into RNA using the four ribonucleoside triphosphates as substrates.</text>
</comment>
<comment type="catalytic activity">
    <reaction evidence="1">
        <text>RNA(n) + a ribonucleoside 5'-triphosphate = RNA(n+1) + diphosphate</text>
        <dbReference type="Rhea" id="RHEA:21248"/>
        <dbReference type="Rhea" id="RHEA-COMP:14527"/>
        <dbReference type="Rhea" id="RHEA-COMP:17342"/>
        <dbReference type="ChEBI" id="CHEBI:33019"/>
        <dbReference type="ChEBI" id="CHEBI:61557"/>
        <dbReference type="ChEBI" id="CHEBI:140395"/>
        <dbReference type="EC" id="2.7.7.6"/>
    </reaction>
</comment>
<comment type="cofactor">
    <cofactor evidence="1">
        <name>Mg(2+)</name>
        <dbReference type="ChEBI" id="CHEBI:18420"/>
    </cofactor>
    <text evidence="1">Binds 1 Mg(2+) ion per subunit.</text>
</comment>
<comment type="cofactor">
    <cofactor evidence="1">
        <name>Zn(2+)</name>
        <dbReference type="ChEBI" id="CHEBI:29105"/>
    </cofactor>
    <text evidence="1">Binds 1 Zn(2+) ion per subunit.</text>
</comment>
<comment type="subunit">
    <text evidence="1">In plastids the minimal PEP RNA polymerase catalytic core is composed of four subunits: alpha, beta, beta', and beta''. When a (nuclear-encoded) sigma factor is associated with the core the holoenzyme is formed, which can initiate transcription.</text>
</comment>
<comment type="subcellular location">
    <subcellularLocation>
        <location evidence="1">Plastid</location>
        <location evidence="1">Chloroplast</location>
    </subcellularLocation>
</comment>
<comment type="similarity">
    <text evidence="1">Belongs to the RNA polymerase beta' chain family. RpoC1 subfamily.</text>
</comment>